<keyword id="KW-0067">ATP-binding</keyword>
<keyword id="KW-0152">Cholesterol biosynthesis</keyword>
<keyword id="KW-0153">Cholesterol metabolism</keyword>
<keyword id="KW-0963">Cytoplasm</keyword>
<keyword id="KW-0444">Lipid biosynthesis</keyword>
<keyword id="KW-0443">Lipid metabolism</keyword>
<keyword id="KW-0456">Lyase</keyword>
<keyword id="KW-0547">Nucleotide-binding</keyword>
<keyword id="KW-1185">Reference proteome</keyword>
<keyword id="KW-0752">Steroid biosynthesis</keyword>
<keyword id="KW-0753">Steroid metabolism</keyword>
<keyword id="KW-0756">Sterol biosynthesis</keyword>
<keyword id="KW-1207">Sterol metabolism</keyword>
<evidence type="ECO:0000250" key="1">
    <source>
        <dbReference type="UniProtKB" id="O23722"/>
    </source>
</evidence>
<evidence type="ECO:0000250" key="2">
    <source>
        <dbReference type="UniProtKB" id="P53602"/>
    </source>
</evidence>
<evidence type="ECO:0000305" key="3"/>
<feature type="chain" id="PRO_0000310438" description="Diphosphomevalonate decarboxylase">
    <location>
        <begin position="1"/>
        <end position="400"/>
    </location>
</feature>
<feature type="binding site" evidence="1">
    <location>
        <begin position="25"/>
        <end position="28"/>
    </location>
    <ligand>
        <name>(R)-5-diphosphomevalonate</name>
        <dbReference type="ChEBI" id="CHEBI:57557"/>
    </ligand>
</feature>
<feature type="binding site" evidence="1">
    <location>
        <position position="80"/>
    </location>
    <ligand>
        <name>(R)-5-diphosphomevalonate</name>
        <dbReference type="ChEBI" id="CHEBI:57557"/>
    </ligand>
</feature>
<feature type="binding site" evidence="1">
    <location>
        <begin position="155"/>
        <end position="160"/>
    </location>
    <ligand>
        <name>(R)-5-diphosphomevalonate</name>
        <dbReference type="ChEBI" id="CHEBI:57557"/>
    </ligand>
</feature>
<feature type="binding site" evidence="1">
    <location>
        <position position="211"/>
    </location>
    <ligand>
        <name>(R)-5-diphosphomevalonate</name>
        <dbReference type="ChEBI" id="CHEBI:57557"/>
    </ligand>
</feature>
<reference key="1">
    <citation type="submission" date="2004-10" db="EMBL/GenBank/DDBJ databases">
        <authorList>
            <consortium name="NIH - Zebrafish Gene Collection (ZGC) project"/>
        </authorList>
    </citation>
    <scope>NUCLEOTIDE SEQUENCE [LARGE SCALE MRNA]</scope>
    <source>
        <tissue>Embryo</tissue>
    </source>
</reference>
<dbReference type="EC" id="4.1.1.33" evidence="2"/>
<dbReference type="EMBL" id="BC085325">
    <property type="protein sequence ID" value="AAH85325.1"/>
    <property type="molecule type" value="mRNA"/>
</dbReference>
<dbReference type="RefSeq" id="NP_001007423.1">
    <property type="nucleotide sequence ID" value="NM_001007422.1"/>
</dbReference>
<dbReference type="SMR" id="Q5U403"/>
<dbReference type="FunCoup" id="Q5U403">
    <property type="interactions" value="1045"/>
</dbReference>
<dbReference type="STRING" id="7955.ENSDARP00000132668"/>
<dbReference type="PaxDb" id="7955-ENSDARP00000098620"/>
<dbReference type="GeneID" id="492781"/>
<dbReference type="KEGG" id="dre:492781"/>
<dbReference type="AGR" id="ZFIN:ZDB-GENE-041114-127"/>
<dbReference type="CTD" id="492781"/>
<dbReference type="ZFIN" id="ZDB-GENE-041114-127">
    <property type="gene designation" value="mvda"/>
</dbReference>
<dbReference type="eggNOG" id="KOG2833">
    <property type="taxonomic scope" value="Eukaryota"/>
</dbReference>
<dbReference type="InParanoid" id="Q5U403"/>
<dbReference type="OrthoDB" id="10253702at2759"/>
<dbReference type="PhylomeDB" id="Q5U403"/>
<dbReference type="Reactome" id="R-DRE-191273">
    <property type="pathway name" value="Cholesterol biosynthesis"/>
</dbReference>
<dbReference type="Reactome" id="R-DRE-446199">
    <property type="pathway name" value="Synthesis of Dolichyl-phosphate"/>
</dbReference>
<dbReference type="UniPathway" id="UPA00063"/>
<dbReference type="PRO" id="PR:Q5U403"/>
<dbReference type="Proteomes" id="UP000000437">
    <property type="component" value="Chromosome 18"/>
</dbReference>
<dbReference type="GO" id="GO:0005829">
    <property type="term" value="C:cytosol"/>
    <property type="evidence" value="ECO:0000250"/>
    <property type="project" value="UniProtKB"/>
</dbReference>
<dbReference type="GO" id="GO:0005524">
    <property type="term" value="F:ATP binding"/>
    <property type="evidence" value="ECO:0007669"/>
    <property type="project" value="UniProtKB-KW"/>
</dbReference>
<dbReference type="GO" id="GO:0004163">
    <property type="term" value="F:diphosphomevalonate decarboxylase activity"/>
    <property type="evidence" value="ECO:0000318"/>
    <property type="project" value="GO_Central"/>
</dbReference>
<dbReference type="GO" id="GO:0006695">
    <property type="term" value="P:cholesterol biosynthetic process"/>
    <property type="evidence" value="ECO:0007669"/>
    <property type="project" value="UniProtKB-UniPathway"/>
</dbReference>
<dbReference type="GO" id="GO:0019287">
    <property type="term" value="P:isopentenyl diphosphate biosynthetic process, mevalonate pathway"/>
    <property type="evidence" value="ECO:0000318"/>
    <property type="project" value="GO_Central"/>
</dbReference>
<dbReference type="GO" id="GO:0003334">
    <property type="term" value="P:keratinocyte development"/>
    <property type="evidence" value="ECO:0000315"/>
    <property type="project" value="ZFIN"/>
</dbReference>
<dbReference type="GO" id="GO:0045765">
    <property type="term" value="P:regulation of angiogenesis"/>
    <property type="evidence" value="ECO:0000315"/>
    <property type="project" value="ZFIN"/>
</dbReference>
<dbReference type="FunFam" id="3.30.230.10:FF:000018">
    <property type="entry name" value="Diphosphomevalonate decarboxylase"/>
    <property type="match status" value="1"/>
</dbReference>
<dbReference type="FunFam" id="3.30.70.890:FF:000005">
    <property type="entry name" value="Diphosphomevalonate decarboxylase"/>
    <property type="match status" value="1"/>
</dbReference>
<dbReference type="Gene3D" id="3.30.230.10">
    <property type="match status" value="1"/>
</dbReference>
<dbReference type="Gene3D" id="3.30.70.890">
    <property type="entry name" value="GHMP kinase, C-terminal domain"/>
    <property type="match status" value="1"/>
</dbReference>
<dbReference type="InterPro" id="IPR036554">
    <property type="entry name" value="GHMP_kinase_C_sf"/>
</dbReference>
<dbReference type="InterPro" id="IPR005935">
    <property type="entry name" value="Mev_decarb"/>
</dbReference>
<dbReference type="InterPro" id="IPR029765">
    <property type="entry name" value="Mev_diP_decarb"/>
</dbReference>
<dbReference type="InterPro" id="IPR053859">
    <property type="entry name" value="MVD-like_N"/>
</dbReference>
<dbReference type="InterPro" id="IPR041431">
    <property type="entry name" value="Mvd1_C"/>
</dbReference>
<dbReference type="InterPro" id="IPR020568">
    <property type="entry name" value="Ribosomal_Su5_D2-typ_SF"/>
</dbReference>
<dbReference type="InterPro" id="IPR014721">
    <property type="entry name" value="Ribsml_uS5_D2-typ_fold_subgr"/>
</dbReference>
<dbReference type="NCBIfam" id="TIGR01240">
    <property type="entry name" value="mevDPdecarb"/>
    <property type="match status" value="1"/>
</dbReference>
<dbReference type="PANTHER" id="PTHR10977">
    <property type="entry name" value="DIPHOSPHOMEVALONATE DECARBOXYLASE"/>
    <property type="match status" value="1"/>
</dbReference>
<dbReference type="PANTHER" id="PTHR10977:SF3">
    <property type="entry name" value="DIPHOSPHOMEVALONATE DECARBOXYLASE"/>
    <property type="match status" value="1"/>
</dbReference>
<dbReference type="Pfam" id="PF18376">
    <property type="entry name" value="MDD_C"/>
    <property type="match status" value="1"/>
</dbReference>
<dbReference type="Pfam" id="PF22700">
    <property type="entry name" value="MVD-like_N"/>
    <property type="match status" value="1"/>
</dbReference>
<dbReference type="PIRSF" id="PIRSF015950">
    <property type="entry name" value="Mev_P_decrbx"/>
    <property type="match status" value="1"/>
</dbReference>
<dbReference type="SUPFAM" id="SSF55060">
    <property type="entry name" value="GHMP Kinase, C-terminal domain"/>
    <property type="match status" value="1"/>
</dbReference>
<dbReference type="SUPFAM" id="SSF54211">
    <property type="entry name" value="Ribosomal protein S5 domain 2-like"/>
    <property type="match status" value="1"/>
</dbReference>
<protein>
    <recommendedName>
        <fullName>Diphosphomevalonate decarboxylase</fullName>
        <ecNumber evidence="2">4.1.1.33</ecNumber>
    </recommendedName>
    <alternativeName>
        <fullName>Mevalonate (diphospho)decarboxylase</fullName>
        <shortName>MDDase</shortName>
    </alternativeName>
    <alternativeName>
        <fullName>Mevalonate pyrophosphate decarboxylase</fullName>
    </alternativeName>
</protein>
<comment type="function">
    <text evidence="2">Catalyzes the ATP dependent decarboxylation of (R)-5-diphosphomevalonate to form isopentenyl diphosphate (IPP). Functions in the mevalonate (MVA) pathway leading to isopentenyl diphosphate (IPP), a key precursor for the biosynthesis of isoprenoids and sterol synthesis.</text>
</comment>
<comment type="catalytic activity">
    <reaction evidence="2">
        <text>(R)-5-diphosphomevalonate + ATP = isopentenyl diphosphate + ADP + phosphate + CO2</text>
        <dbReference type="Rhea" id="RHEA:23732"/>
        <dbReference type="ChEBI" id="CHEBI:16526"/>
        <dbReference type="ChEBI" id="CHEBI:30616"/>
        <dbReference type="ChEBI" id="CHEBI:43474"/>
        <dbReference type="ChEBI" id="CHEBI:57557"/>
        <dbReference type="ChEBI" id="CHEBI:128769"/>
        <dbReference type="ChEBI" id="CHEBI:456216"/>
        <dbReference type="EC" id="4.1.1.33"/>
    </reaction>
</comment>
<comment type="pathway">
    <text evidence="3">Steroid biosynthesis; cholesterol biosynthesis.</text>
</comment>
<comment type="subunit">
    <text evidence="2">Homodimer.</text>
</comment>
<comment type="subcellular location">
    <subcellularLocation>
        <location evidence="2">Cytoplasm</location>
    </subcellularLocation>
</comment>
<comment type="similarity">
    <text evidence="3">Belongs to the diphosphomevalonate decarboxylase family.</text>
</comment>
<comment type="caution">
    <text evidence="2">Was originally thought to be located in the peroxisome. However, was later shown to be cytosolic.</text>
</comment>
<accession>Q5U403</accession>
<proteinExistence type="evidence at transcript level"/>
<gene>
    <name type="primary">mvd</name>
    <name type="synonym">mvda</name>
    <name type="ORF">zgc:100824</name>
</gene>
<sequence>MSENILQDLEMVTCTAPVNIAVIKYWGKRDEDLILPVNASLSVTLHQDHLRTTTTIACSRSFHKDCIWLNGKEQDISHPRLQSCLLEIRRLAQRRKNTGDPASDVSNKVHICSVNNFPTAAGLASSAAGYACLVYTLSQLFNVEGELSGVARQGSGSACRSLYGGFVQWKLGEQSDGKDSIAEQVASELYWPELRVLILVVSAEQKSVGSTSGMHTSVETSHLLKYRADAVVPGRMEEMIRAIRLRDFPKFGELTMKDSNQFHAICLDTYPPIFYLNNISHQIISLVHRYNQYYGETRVAYTFDAGPNAVIYSLQDYLPEFVEVVRHFFPPEVNEEEFFKGLPVCPADLSEEMIRDINMKPTPNGIRYMISTKAGPGPRVVEDPNLHLLGADGLPKKSAV</sequence>
<name>MVD1_DANRE</name>
<organism>
    <name type="scientific">Danio rerio</name>
    <name type="common">Zebrafish</name>
    <name type="synonym">Brachydanio rerio</name>
    <dbReference type="NCBI Taxonomy" id="7955"/>
    <lineage>
        <taxon>Eukaryota</taxon>
        <taxon>Metazoa</taxon>
        <taxon>Chordata</taxon>
        <taxon>Craniata</taxon>
        <taxon>Vertebrata</taxon>
        <taxon>Euteleostomi</taxon>
        <taxon>Actinopterygii</taxon>
        <taxon>Neopterygii</taxon>
        <taxon>Teleostei</taxon>
        <taxon>Ostariophysi</taxon>
        <taxon>Cypriniformes</taxon>
        <taxon>Danionidae</taxon>
        <taxon>Danioninae</taxon>
        <taxon>Danio</taxon>
    </lineage>
</organism>